<proteinExistence type="inferred from homology"/>
<gene>
    <name evidence="1" type="primary">fhs</name>
    <name type="ordered locus">HQ_1768A</name>
</gene>
<organism>
    <name type="scientific">Haloquadratum walsbyi (strain DSM 16790 / HBSQ001)</name>
    <dbReference type="NCBI Taxonomy" id="362976"/>
    <lineage>
        <taxon>Archaea</taxon>
        <taxon>Methanobacteriati</taxon>
        <taxon>Methanobacteriota</taxon>
        <taxon>Stenosarchaea group</taxon>
        <taxon>Halobacteria</taxon>
        <taxon>Halobacteriales</taxon>
        <taxon>Haloferacaceae</taxon>
        <taxon>Haloquadratum</taxon>
    </lineage>
</organism>
<accession>Q18JB5</accession>
<evidence type="ECO:0000255" key="1">
    <source>
        <dbReference type="HAMAP-Rule" id="MF_01543"/>
    </source>
</evidence>
<feature type="chain" id="PRO_0000293074" description="Formate--tetrahydrofolate ligase">
    <location>
        <begin position="1"/>
        <end position="580"/>
    </location>
</feature>
<feature type="binding site" evidence="1">
    <location>
        <begin position="83"/>
        <end position="90"/>
    </location>
    <ligand>
        <name>ATP</name>
        <dbReference type="ChEBI" id="CHEBI:30616"/>
    </ligand>
</feature>
<protein>
    <recommendedName>
        <fullName evidence="1">Formate--tetrahydrofolate ligase</fullName>
        <ecNumber evidence="1">6.3.4.3</ecNumber>
    </recommendedName>
    <alternativeName>
        <fullName evidence="1">Formyltetrahydrofolate synthetase</fullName>
        <shortName evidence="1">FHS</shortName>
        <shortName evidence="1">FTHFS</shortName>
    </alternativeName>
</protein>
<name>FTHS_HALWD</name>
<sequence length="580" mass="62054">MTDDSKDTDLSEDNGFPTDYEIAQNADMTPIWDLLEPWDLGNDDLSYYGEYTAKLSHDAVDHLREEAKTRENNLILVTGMTPTPMGEGKTVTTVGLGQTLNHLDEEAMIAIREPSLGPVFGVKGGAAGGGYSQVLPMEEINLHFTGDLHALTSAHNLIAAMLDAKLSQSDEFDVDVNDISWPRALDMNDRALRETVIGLGGESGGVPREDGFLLTAASELMAVLCLSSDLEDLKMRVSRIIVGYENDGEPITVDDIDATGPVTMLLRDAIEPNVVQTIEGTPAFVHGGPFANIAHGTNSLIADKAAFGMGDYLVTEAGFGSDLGAEKFMNIVCRLGDMTPDAITLVASVRALKYHGLDMWPADIDEINGAGVDALEAGFVNLDKHVTNLQKFGIPVVVAVNRFPNDTDVEVNAVLNHCRNDLNVKAASSTVFAEGSEGGVELAERVIGAVESSDPEDFEYLYPADATIKEKIETVATEIYGAGSVNYSTDAEDDIERMRELGFDTVPVCLSKTFHSLTDDARQKGAPTGWTLNVRKLYPSAGAGFIVALTGDVLTMPGLPADPAAADMDIDADGDITGLF</sequence>
<keyword id="KW-0067">ATP-binding</keyword>
<keyword id="KW-0436">Ligase</keyword>
<keyword id="KW-0547">Nucleotide-binding</keyword>
<keyword id="KW-0554">One-carbon metabolism</keyword>
<keyword id="KW-1185">Reference proteome</keyword>
<reference key="1">
    <citation type="journal article" date="2006" name="BMC Genomics">
        <title>The genome of the square archaeon Haloquadratum walsbyi: life at the limits of water activity.</title>
        <authorList>
            <person name="Bolhuis H."/>
            <person name="Palm P."/>
            <person name="Wende A."/>
            <person name="Falb M."/>
            <person name="Rampp M."/>
            <person name="Rodriguez-Valera F."/>
            <person name="Pfeiffer F."/>
            <person name="Oesterhelt D."/>
        </authorList>
    </citation>
    <scope>NUCLEOTIDE SEQUENCE [LARGE SCALE GENOMIC DNA]</scope>
    <source>
        <strain>DSM 16790 / HBSQ001</strain>
    </source>
</reference>
<dbReference type="EC" id="6.3.4.3" evidence="1"/>
<dbReference type="EMBL" id="AM180088">
    <property type="protein sequence ID" value="CAJ51896.1"/>
    <property type="molecule type" value="Genomic_DNA"/>
</dbReference>
<dbReference type="RefSeq" id="WP_011571043.1">
    <property type="nucleotide sequence ID" value="NC_008212.1"/>
</dbReference>
<dbReference type="SMR" id="Q18JB5"/>
<dbReference type="STRING" id="362976.HQ_1768A"/>
<dbReference type="GeneID" id="4193985"/>
<dbReference type="KEGG" id="hwa:HQ_1768A"/>
<dbReference type="eggNOG" id="arCOG04541">
    <property type="taxonomic scope" value="Archaea"/>
</dbReference>
<dbReference type="HOGENOM" id="CLU_003601_3_3_2"/>
<dbReference type="UniPathway" id="UPA00193"/>
<dbReference type="Proteomes" id="UP000001975">
    <property type="component" value="Chromosome"/>
</dbReference>
<dbReference type="GO" id="GO:0005524">
    <property type="term" value="F:ATP binding"/>
    <property type="evidence" value="ECO:0007669"/>
    <property type="project" value="UniProtKB-UniRule"/>
</dbReference>
<dbReference type="GO" id="GO:0004329">
    <property type="term" value="F:formate-tetrahydrofolate ligase activity"/>
    <property type="evidence" value="ECO:0007669"/>
    <property type="project" value="UniProtKB-UniRule"/>
</dbReference>
<dbReference type="GO" id="GO:0035999">
    <property type="term" value="P:tetrahydrofolate interconversion"/>
    <property type="evidence" value="ECO:0007669"/>
    <property type="project" value="UniProtKB-UniRule"/>
</dbReference>
<dbReference type="FunFam" id="3.30.1510.10:FF:000001">
    <property type="entry name" value="Formate--tetrahydrofolate ligase"/>
    <property type="match status" value="1"/>
</dbReference>
<dbReference type="FunFam" id="3.10.410.10:FF:000001">
    <property type="entry name" value="Putative formate--tetrahydrofolate ligase"/>
    <property type="match status" value="1"/>
</dbReference>
<dbReference type="Gene3D" id="3.30.1510.10">
    <property type="entry name" value="Domain 2, N(10)-formyltetrahydrofolate synthetase"/>
    <property type="match status" value="1"/>
</dbReference>
<dbReference type="Gene3D" id="3.10.410.10">
    <property type="entry name" value="Formyltetrahydrofolate synthetase, domain 3"/>
    <property type="match status" value="1"/>
</dbReference>
<dbReference type="Gene3D" id="3.40.50.300">
    <property type="entry name" value="P-loop containing nucleotide triphosphate hydrolases"/>
    <property type="match status" value="1"/>
</dbReference>
<dbReference type="HAMAP" id="MF_01543">
    <property type="entry name" value="FTHFS"/>
    <property type="match status" value="1"/>
</dbReference>
<dbReference type="InterPro" id="IPR000559">
    <property type="entry name" value="Formate_THF_ligase"/>
</dbReference>
<dbReference type="InterPro" id="IPR020628">
    <property type="entry name" value="Formate_THF_ligase_CS"/>
</dbReference>
<dbReference type="InterPro" id="IPR027417">
    <property type="entry name" value="P-loop_NTPase"/>
</dbReference>
<dbReference type="NCBIfam" id="NF010030">
    <property type="entry name" value="PRK13505.1"/>
    <property type="match status" value="1"/>
</dbReference>
<dbReference type="Pfam" id="PF01268">
    <property type="entry name" value="FTHFS"/>
    <property type="match status" value="1"/>
</dbReference>
<dbReference type="SUPFAM" id="SSF52540">
    <property type="entry name" value="P-loop containing nucleoside triphosphate hydrolases"/>
    <property type="match status" value="1"/>
</dbReference>
<dbReference type="PROSITE" id="PS00721">
    <property type="entry name" value="FTHFS_1"/>
    <property type="match status" value="1"/>
</dbReference>
<dbReference type="PROSITE" id="PS00722">
    <property type="entry name" value="FTHFS_2"/>
    <property type="match status" value="1"/>
</dbReference>
<comment type="catalytic activity">
    <reaction evidence="1">
        <text>(6S)-5,6,7,8-tetrahydrofolate + formate + ATP = (6R)-10-formyltetrahydrofolate + ADP + phosphate</text>
        <dbReference type="Rhea" id="RHEA:20221"/>
        <dbReference type="ChEBI" id="CHEBI:15740"/>
        <dbReference type="ChEBI" id="CHEBI:30616"/>
        <dbReference type="ChEBI" id="CHEBI:43474"/>
        <dbReference type="ChEBI" id="CHEBI:57453"/>
        <dbReference type="ChEBI" id="CHEBI:195366"/>
        <dbReference type="ChEBI" id="CHEBI:456216"/>
        <dbReference type="EC" id="6.3.4.3"/>
    </reaction>
</comment>
<comment type="pathway">
    <text evidence="1">One-carbon metabolism; tetrahydrofolate interconversion.</text>
</comment>
<comment type="similarity">
    <text evidence="1">Belongs to the formate--tetrahydrofolate ligase family.</text>
</comment>